<feature type="chain" id="PRO_0000118318" description="NADH-ubiquinone oxidoreductase chain 6">
    <location>
        <begin position="1"/>
        <end position="167"/>
    </location>
</feature>
<feature type="transmembrane region" description="Helical" evidence="2">
    <location>
        <begin position="1"/>
        <end position="21"/>
    </location>
</feature>
<feature type="transmembrane region" description="Helical" evidence="2">
    <location>
        <begin position="23"/>
        <end position="43"/>
    </location>
</feature>
<feature type="transmembrane region" description="Helical" evidence="2">
    <location>
        <begin position="47"/>
        <end position="67"/>
    </location>
</feature>
<feature type="transmembrane region" description="Helical" evidence="2">
    <location>
        <begin position="86"/>
        <end position="106"/>
    </location>
</feature>
<feature type="transmembrane region" description="Helical" evidence="2">
    <location>
        <begin position="133"/>
        <end position="153"/>
    </location>
</feature>
<geneLocation type="mitochondrion"/>
<organism>
    <name type="scientific">Polypterus ornatipinnis</name>
    <name type="common">Ornate bichir</name>
    <dbReference type="NCBI Taxonomy" id="49895"/>
    <lineage>
        <taxon>Eukaryota</taxon>
        <taxon>Metazoa</taxon>
        <taxon>Chordata</taxon>
        <taxon>Craniata</taxon>
        <taxon>Vertebrata</taxon>
        <taxon>Euteleostomi</taxon>
        <taxon>Actinopterygii</taxon>
        <taxon>Polypteriformes</taxon>
        <taxon>Polypteridae</taxon>
        <taxon>Polypterus</taxon>
    </lineage>
</organism>
<comment type="function">
    <text evidence="1">Core subunit of the mitochondrial membrane respiratory chain NADH dehydrogenase (Complex I) that is believed to belong to the minimal assembly required for catalysis. Complex I functions in the transfer of electrons from NADH to the respiratory chain. The immediate electron acceptor for the enzyme is believed to be ubiquinone (By similarity).</text>
</comment>
<comment type="catalytic activity">
    <reaction>
        <text>a ubiquinone + NADH + 5 H(+)(in) = a ubiquinol + NAD(+) + 4 H(+)(out)</text>
        <dbReference type="Rhea" id="RHEA:29091"/>
        <dbReference type="Rhea" id="RHEA-COMP:9565"/>
        <dbReference type="Rhea" id="RHEA-COMP:9566"/>
        <dbReference type="ChEBI" id="CHEBI:15378"/>
        <dbReference type="ChEBI" id="CHEBI:16389"/>
        <dbReference type="ChEBI" id="CHEBI:17976"/>
        <dbReference type="ChEBI" id="CHEBI:57540"/>
        <dbReference type="ChEBI" id="CHEBI:57945"/>
        <dbReference type="EC" id="7.1.1.2"/>
    </reaction>
</comment>
<comment type="subcellular location">
    <subcellularLocation>
        <location evidence="3">Mitochondrion membrane</location>
        <topology evidence="3">Multi-pass membrane protein</topology>
    </subcellularLocation>
</comment>
<comment type="similarity">
    <text evidence="3">Belongs to the complex I subunit 6 family.</text>
</comment>
<sequence length="167" mass="18386">MVLMVVFSVMFLISLIAVASNPSPYFAAFGLMVGAGVGCGMLMQCGMTFLSMILFLIYLGGMLVVFAYSPALAAEPYPNAWGSWEVFSYVLVYMFLVIVAWVAFVGDMELFDDVEEYFGAMRRYVGVAEVYNAGGYMLFIAGWVLLMALLVVLELTRGYSRGCLRAV</sequence>
<accession>Q95919</accession>
<proteinExistence type="inferred from homology"/>
<reference key="1">
    <citation type="journal article" date="1996" name="Genetics">
        <title>The complete mitochondrial DNA sequence of the bichir (Polypterus ornatipinnis), a basal ray-finned fish: ancient establishment of the consensus vertebrate gene order.</title>
        <authorList>
            <person name="Noack K."/>
            <person name="Zardoya R."/>
            <person name="Meyer A."/>
        </authorList>
    </citation>
    <scope>NUCLEOTIDE SEQUENCE [GENOMIC DNA]</scope>
</reference>
<keyword id="KW-0249">Electron transport</keyword>
<keyword id="KW-0472">Membrane</keyword>
<keyword id="KW-0496">Mitochondrion</keyword>
<keyword id="KW-0520">NAD</keyword>
<keyword id="KW-0679">Respiratory chain</keyword>
<keyword id="KW-1278">Translocase</keyword>
<keyword id="KW-0812">Transmembrane</keyword>
<keyword id="KW-1133">Transmembrane helix</keyword>
<keyword id="KW-0813">Transport</keyword>
<keyword id="KW-0830">Ubiquinone</keyword>
<name>NU6M_POLOR</name>
<evidence type="ECO:0000250" key="1"/>
<evidence type="ECO:0000255" key="2"/>
<evidence type="ECO:0000305" key="3"/>
<dbReference type="EC" id="7.1.1.2"/>
<dbReference type="EMBL" id="U62532">
    <property type="protein sequence ID" value="AAC60316.1"/>
    <property type="molecule type" value="Genomic_DNA"/>
</dbReference>
<dbReference type="PIR" id="T11465">
    <property type="entry name" value="T11465"/>
</dbReference>
<dbReference type="RefSeq" id="NP_008327.1">
    <property type="nucleotide sequence ID" value="NC_001778.1"/>
</dbReference>
<dbReference type="SMR" id="Q95919"/>
<dbReference type="GeneID" id="808028"/>
<dbReference type="CTD" id="4541"/>
<dbReference type="GO" id="GO:0031966">
    <property type="term" value="C:mitochondrial membrane"/>
    <property type="evidence" value="ECO:0007669"/>
    <property type="project" value="UniProtKB-SubCell"/>
</dbReference>
<dbReference type="GO" id="GO:0008137">
    <property type="term" value="F:NADH dehydrogenase (ubiquinone) activity"/>
    <property type="evidence" value="ECO:0007669"/>
    <property type="project" value="UniProtKB-EC"/>
</dbReference>
<dbReference type="Gene3D" id="1.20.120.1200">
    <property type="entry name" value="NADH-ubiquinone/plastoquinone oxidoreductase chain 6, subunit NuoJ"/>
    <property type="match status" value="1"/>
</dbReference>
<dbReference type="InterPro" id="IPR050269">
    <property type="entry name" value="ComplexI_Subunit6"/>
</dbReference>
<dbReference type="InterPro" id="IPR001457">
    <property type="entry name" value="NADH_UbQ/plastoQ_OxRdtase_su6"/>
</dbReference>
<dbReference type="InterPro" id="IPR042106">
    <property type="entry name" value="Nuo/plastoQ_OxRdtase_6_NuoJ"/>
</dbReference>
<dbReference type="PANTHER" id="PTHR11435">
    <property type="entry name" value="NADH UBIQUINONE OXIDOREDUCTASE SUBUNIT ND6"/>
    <property type="match status" value="1"/>
</dbReference>
<dbReference type="PANTHER" id="PTHR11435:SF1">
    <property type="entry name" value="NADH-UBIQUINONE OXIDOREDUCTASE CHAIN 6"/>
    <property type="match status" value="1"/>
</dbReference>
<dbReference type="Pfam" id="PF00499">
    <property type="entry name" value="Oxidored_q3"/>
    <property type="match status" value="1"/>
</dbReference>
<protein>
    <recommendedName>
        <fullName>NADH-ubiquinone oxidoreductase chain 6</fullName>
        <ecNumber>7.1.1.2</ecNumber>
    </recommendedName>
    <alternativeName>
        <fullName>NADH dehydrogenase subunit 6</fullName>
    </alternativeName>
</protein>
<gene>
    <name type="primary">MT-ND6</name>
    <name type="synonym">MTND6</name>
    <name type="synonym">NADH6</name>
    <name type="synonym">ND6</name>
</gene>